<feature type="chain" id="PRO_0000187792" description="Peptidyl-tRNA hydrolase">
    <location>
        <begin position="1"/>
        <end position="200"/>
    </location>
</feature>
<feature type="active site" description="Proton acceptor" evidence="1">
    <location>
        <position position="22"/>
    </location>
</feature>
<feature type="binding site" evidence="1">
    <location>
        <position position="17"/>
    </location>
    <ligand>
        <name>tRNA</name>
        <dbReference type="ChEBI" id="CHEBI:17843"/>
    </ligand>
</feature>
<feature type="binding site" evidence="1">
    <location>
        <position position="78"/>
    </location>
    <ligand>
        <name>tRNA</name>
        <dbReference type="ChEBI" id="CHEBI:17843"/>
    </ligand>
</feature>
<feature type="binding site" evidence="1">
    <location>
        <position position="80"/>
    </location>
    <ligand>
        <name>tRNA</name>
        <dbReference type="ChEBI" id="CHEBI:17843"/>
    </ligand>
</feature>
<feature type="binding site" evidence="1">
    <location>
        <position position="126"/>
    </location>
    <ligand>
        <name>tRNA</name>
        <dbReference type="ChEBI" id="CHEBI:17843"/>
    </ligand>
</feature>
<feature type="site" description="Discriminates between blocked and unblocked aminoacyl-tRNA" evidence="1">
    <location>
        <position position="12"/>
    </location>
</feature>
<feature type="site" description="Stabilizes the basic form of H active site to accept a proton" evidence="1">
    <location>
        <position position="105"/>
    </location>
</feature>
<accession>Q6AAC7</accession>
<keyword id="KW-0963">Cytoplasm</keyword>
<keyword id="KW-0378">Hydrolase</keyword>
<keyword id="KW-0694">RNA-binding</keyword>
<keyword id="KW-0820">tRNA-binding</keyword>
<comment type="function">
    <text evidence="1">Hydrolyzes ribosome-free peptidyl-tRNAs (with 1 or more amino acids incorporated), which drop off the ribosome during protein synthesis, or as a result of ribosome stalling.</text>
</comment>
<comment type="function">
    <text evidence="1">Catalyzes the release of premature peptidyl moieties from peptidyl-tRNA molecules trapped in stalled 50S ribosomal subunits, and thus maintains levels of free tRNAs and 50S ribosomes.</text>
</comment>
<comment type="catalytic activity">
    <reaction evidence="1">
        <text>an N-acyl-L-alpha-aminoacyl-tRNA + H2O = an N-acyl-L-amino acid + a tRNA + H(+)</text>
        <dbReference type="Rhea" id="RHEA:54448"/>
        <dbReference type="Rhea" id="RHEA-COMP:10123"/>
        <dbReference type="Rhea" id="RHEA-COMP:13883"/>
        <dbReference type="ChEBI" id="CHEBI:15377"/>
        <dbReference type="ChEBI" id="CHEBI:15378"/>
        <dbReference type="ChEBI" id="CHEBI:59874"/>
        <dbReference type="ChEBI" id="CHEBI:78442"/>
        <dbReference type="ChEBI" id="CHEBI:138191"/>
        <dbReference type="EC" id="3.1.1.29"/>
    </reaction>
</comment>
<comment type="subunit">
    <text evidence="1">Monomer.</text>
</comment>
<comment type="subcellular location">
    <subcellularLocation>
        <location evidence="1">Cytoplasm</location>
    </subcellularLocation>
</comment>
<comment type="similarity">
    <text evidence="1">Belongs to the PTH family.</text>
</comment>
<organism>
    <name type="scientific">Cutibacterium acnes (strain DSM 16379 / KPA171202)</name>
    <name type="common">Propionibacterium acnes</name>
    <dbReference type="NCBI Taxonomy" id="267747"/>
    <lineage>
        <taxon>Bacteria</taxon>
        <taxon>Bacillati</taxon>
        <taxon>Actinomycetota</taxon>
        <taxon>Actinomycetes</taxon>
        <taxon>Propionibacteriales</taxon>
        <taxon>Propionibacteriaceae</taxon>
        <taxon>Cutibacterium</taxon>
    </lineage>
</organism>
<proteinExistence type="inferred from homology"/>
<sequence length="200" mass="21356">MSPSWLVIGLGNPGPRYDGTRHNVGADVIAELCRRAGEKLSPARGQRAELVRTRLSSAGLGVPAVDAQTVILMRSRTYMNESGIAVSKVASFAGITPDHLIVVHDEIDLDPGRLRLKKGGGDNGHNGLKSIRAHLRTGDFIRVRLGVGRPPGHQDPADWVLARVPARQRAEMGVQVALAADAVESIIIQGLAAAQNRFNS</sequence>
<gene>
    <name evidence="1" type="primary">pth</name>
    <name type="ordered locus">PPA0536</name>
</gene>
<protein>
    <recommendedName>
        <fullName evidence="1">Peptidyl-tRNA hydrolase</fullName>
        <shortName evidence="1">Pth</shortName>
        <ecNumber evidence="1">3.1.1.29</ecNumber>
    </recommendedName>
</protein>
<name>PTH_CUTAK</name>
<evidence type="ECO:0000255" key="1">
    <source>
        <dbReference type="HAMAP-Rule" id="MF_00083"/>
    </source>
</evidence>
<dbReference type="EC" id="3.1.1.29" evidence="1"/>
<dbReference type="EMBL" id="AE017283">
    <property type="protein sequence ID" value="AAT82289.1"/>
    <property type="molecule type" value="Genomic_DNA"/>
</dbReference>
<dbReference type="RefSeq" id="WP_002516655.1">
    <property type="nucleotide sequence ID" value="NZ_CP025935.1"/>
</dbReference>
<dbReference type="SMR" id="Q6AAC7"/>
<dbReference type="EnsemblBacteria" id="AAT82289">
    <property type="protein sequence ID" value="AAT82289"/>
    <property type="gene ID" value="PPA0536"/>
</dbReference>
<dbReference type="GeneID" id="92856519"/>
<dbReference type="KEGG" id="pac:PPA0536"/>
<dbReference type="eggNOG" id="COG0193">
    <property type="taxonomic scope" value="Bacteria"/>
</dbReference>
<dbReference type="HOGENOM" id="CLU_062456_2_2_11"/>
<dbReference type="Proteomes" id="UP000000603">
    <property type="component" value="Chromosome"/>
</dbReference>
<dbReference type="GO" id="GO:0005737">
    <property type="term" value="C:cytoplasm"/>
    <property type="evidence" value="ECO:0007669"/>
    <property type="project" value="UniProtKB-SubCell"/>
</dbReference>
<dbReference type="GO" id="GO:0004045">
    <property type="term" value="F:peptidyl-tRNA hydrolase activity"/>
    <property type="evidence" value="ECO:0007669"/>
    <property type="project" value="UniProtKB-UniRule"/>
</dbReference>
<dbReference type="GO" id="GO:0000049">
    <property type="term" value="F:tRNA binding"/>
    <property type="evidence" value="ECO:0007669"/>
    <property type="project" value="UniProtKB-UniRule"/>
</dbReference>
<dbReference type="GO" id="GO:0006515">
    <property type="term" value="P:protein quality control for misfolded or incompletely synthesized proteins"/>
    <property type="evidence" value="ECO:0007669"/>
    <property type="project" value="UniProtKB-UniRule"/>
</dbReference>
<dbReference type="GO" id="GO:0072344">
    <property type="term" value="P:rescue of stalled ribosome"/>
    <property type="evidence" value="ECO:0007669"/>
    <property type="project" value="UniProtKB-UniRule"/>
</dbReference>
<dbReference type="CDD" id="cd00462">
    <property type="entry name" value="PTH"/>
    <property type="match status" value="1"/>
</dbReference>
<dbReference type="FunFam" id="3.40.50.1470:FF:000001">
    <property type="entry name" value="Peptidyl-tRNA hydrolase"/>
    <property type="match status" value="1"/>
</dbReference>
<dbReference type="Gene3D" id="3.40.50.1470">
    <property type="entry name" value="Peptidyl-tRNA hydrolase"/>
    <property type="match status" value="1"/>
</dbReference>
<dbReference type="HAMAP" id="MF_00083">
    <property type="entry name" value="Pept_tRNA_hydro_bact"/>
    <property type="match status" value="1"/>
</dbReference>
<dbReference type="InterPro" id="IPR001328">
    <property type="entry name" value="Pept_tRNA_hydro"/>
</dbReference>
<dbReference type="InterPro" id="IPR018171">
    <property type="entry name" value="Pept_tRNA_hydro_CS"/>
</dbReference>
<dbReference type="InterPro" id="IPR036416">
    <property type="entry name" value="Pept_tRNA_hydro_sf"/>
</dbReference>
<dbReference type="NCBIfam" id="TIGR00447">
    <property type="entry name" value="pth"/>
    <property type="match status" value="1"/>
</dbReference>
<dbReference type="PANTHER" id="PTHR17224">
    <property type="entry name" value="PEPTIDYL-TRNA HYDROLASE"/>
    <property type="match status" value="1"/>
</dbReference>
<dbReference type="PANTHER" id="PTHR17224:SF1">
    <property type="entry name" value="PEPTIDYL-TRNA HYDROLASE"/>
    <property type="match status" value="1"/>
</dbReference>
<dbReference type="Pfam" id="PF01195">
    <property type="entry name" value="Pept_tRNA_hydro"/>
    <property type="match status" value="1"/>
</dbReference>
<dbReference type="SUPFAM" id="SSF53178">
    <property type="entry name" value="Peptidyl-tRNA hydrolase-like"/>
    <property type="match status" value="1"/>
</dbReference>
<dbReference type="PROSITE" id="PS01196">
    <property type="entry name" value="PEPT_TRNA_HYDROL_2"/>
    <property type="match status" value="1"/>
</dbReference>
<reference key="1">
    <citation type="journal article" date="2004" name="Science">
        <title>The complete genome sequence of Propionibacterium acnes, a commensal of human skin.</title>
        <authorList>
            <person name="Brueggemann H."/>
            <person name="Henne A."/>
            <person name="Hoster F."/>
            <person name="Liesegang H."/>
            <person name="Wiezer A."/>
            <person name="Strittmatter A."/>
            <person name="Hujer S."/>
            <person name="Duerre P."/>
            <person name="Gottschalk G."/>
        </authorList>
    </citation>
    <scope>NUCLEOTIDE SEQUENCE [LARGE SCALE GENOMIC DNA]</scope>
    <source>
        <strain>DSM 16379 / KPA171202</strain>
    </source>
</reference>